<dbReference type="EC" id="3.1.1.3"/>
<dbReference type="EMBL" id="AAFW02000089">
    <property type="protein sequence ID" value="EDN62181.1"/>
    <property type="molecule type" value="Genomic_DNA"/>
</dbReference>
<dbReference type="ESTHER" id="yeast-ATG15">
    <property type="family name" value="ATG15-related-lipase"/>
</dbReference>
<dbReference type="GlyCosmos" id="A6ZTP2">
    <property type="glycosylation" value="3 sites, No reported glycans"/>
</dbReference>
<dbReference type="HOGENOM" id="CLU_028295_0_2_1"/>
<dbReference type="Proteomes" id="UP000007060">
    <property type="component" value="Unassembled WGS sequence"/>
</dbReference>
<dbReference type="GO" id="GO:0032585">
    <property type="term" value="C:multivesicular body membrane"/>
    <property type="evidence" value="ECO:0007669"/>
    <property type="project" value="UniProtKB-SubCell"/>
</dbReference>
<dbReference type="GO" id="GO:0005775">
    <property type="term" value="C:vacuolar lumen"/>
    <property type="evidence" value="ECO:0007669"/>
    <property type="project" value="TreeGrafter"/>
</dbReference>
<dbReference type="GO" id="GO:0004620">
    <property type="term" value="F:phospholipase activity"/>
    <property type="evidence" value="ECO:0007669"/>
    <property type="project" value="TreeGrafter"/>
</dbReference>
<dbReference type="GO" id="GO:0004806">
    <property type="term" value="F:triacylglycerol lipase activity"/>
    <property type="evidence" value="ECO:0007669"/>
    <property type="project" value="UniProtKB-EC"/>
</dbReference>
<dbReference type="GO" id="GO:0034496">
    <property type="term" value="P:multivesicular body membrane disassembly"/>
    <property type="evidence" value="ECO:0007669"/>
    <property type="project" value="TreeGrafter"/>
</dbReference>
<dbReference type="GO" id="GO:0046461">
    <property type="term" value="P:neutral lipid catabolic process"/>
    <property type="evidence" value="ECO:0007669"/>
    <property type="project" value="TreeGrafter"/>
</dbReference>
<dbReference type="GO" id="GO:0006660">
    <property type="term" value="P:phosphatidylserine catabolic process"/>
    <property type="evidence" value="ECO:0007669"/>
    <property type="project" value="TreeGrafter"/>
</dbReference>
<dbReference type="GO" id="GO:0034727">
    <property type="term" value="P:piecemeal microautophagy of the nucleus"/>
    <property type="evidence" value="ECO:0007669"/>
    <property type="project" value="TreeGrafter"/>
</dbReference>
<dbReference type="CDD" id="cd00519">
    <property type="entry name" value="Lipase_3"/>
    <property type="match status" value="1"/>
</dbReference>
<dbReference type="FunFam" id="3.40.50.1820:FF:000339">
    <property type="entry name" value="Lipase, putative"/>
    <property type="match status" value="1"/>
</dbReference>
<dbReference type="Gene3D" id="3.40.50.1820">
    <property type="entry name" value="alpha/beta hydrolase"/>
    <property type="match status" value="1"/>
</dbReference>
<dbReference type="InterPro" id="IPR029058">
    <property type="entry name" value="AB_hydrolase_fold"/>
</dbReference>
<dbReference type="InterPro" id="IPR050805">
    <property type="entry name" value="ATG15_Lipase"/>
</dbReference>
<dbReference type="InterPro" id="IPR002921">
    <property type="entry name" value="Fungal_lipase-type"/>
</dbReference>
<dbReference type="PANTHER" id="PTHR47175">
    <property type="entry name" value="LIPASE ATG15-RELATED"/>
    <property type="match status" value="1"/>
</dbReference>
<dbReference type="PANTHER" id="PTHR47175:SF2">
    <property type="entry name" value="LIPASE ATG15-RELATED"/>
    <property type="match status" value="1"/>
</dbReference>
<dbReference type="Pfam" id="PF01764">
    <property type="entry name" value="Lipase_3"/>
    <property type="match status" value="1"/>
</dbReference>
<dbReference type="SUPFAM" id="SSF53474">
    <property type="entry name" value="alpha/beta-Hydrolases"/>
    <property type="match status" value="1"/>
</dbReference>
<dbReference type="PROSITE" id="PS00120">
    <property type="entry name" value="LIPASE_SER"/>
    <property type="match status" value="1"/>
</dbReference>
<protein>
    <recommendedName>
        <fullName>Putative lipase ATG15</fullName>
        <ecNumber>3.1.1.3</ecNumber>
    </recommendedName>
    <alternativeName>
        <fullName>Autophagy-related protein 15</fullName>
    </alternativeName>
    <alternativeName>
        <fullName>Cytoplasm to vacuole targeting protein 17</fullName>
    </alternativeName>
</protein>
<sequence length="520" mass="58423">MLHKSPSRKRFASPLHLGCILTLTVLCLIAYYFALPDYLSVGKSSSRGAMDQKSDGTFRLKSIYRHGVGANHRLHQRLEVTPEVISAAGMLYQETTTQGQDFEDQEPLWTTNAEYATTNPFDFEFELRRMPLLMKRMKERDPEFIESYIYGETYMTEEEEHAMWIDDDIVAPNITDRGTVVSLALMSSNAYVRIPQTGDWRNVTEPWNETEPEDFGWDGDGIRGHVFYNEVENIVVLSIKGTSAQGLPGSGEDETTGNDKINDNLLFSCCCARVSYLWTTVCDCYVKSYTCDESCLEKELRRKDRFYSAVVDIYKGVLKEYPDAAIWVTGHSLGGALASLLGRTFGLPAVAFESPGELLPSKRLHLPFPPGLPSYMEGIWHFGHNADPIFMGTCNGASSSCSLVGYAMETACHTGRVCVYDVVNDKGWSVNMFNHRIHKVIDEVLLGYEQAAKCVEPEPCVDCYNWKFIPSRDWESSSRLITKTKSHAAPTTTTRTTATTTSSSTCVGRNWLGFCTKYEL</sequence>
<keyword id="KW-0072">Autophagy</keyword>
<keyword id="KW-0967">Endosome</keyword>
<keyword id="KW-0325">Glycoprotein</keyword>
<keyword id="KW-0378">Hydrolase</keyword>
<keyword id="KW-0442">Lipid degradation</keyword>
<keyword id="KW-0443">Lipid metabolism</keyword>
<keyword id="KW-0472">Membrane</keyword>
<keyword id="KW-0735">Signal-anchor</keyword>
<keyword id="KW-0812">Transmembrane</keyword>
<keyword id="KW-1133">Transmembrane helix</keyword>
<gene>
    <name type="primary">ATG15</name>
    <name type="synonym">AUT5</name>
    <name type="synonym">CVT17</name>
    <name type="ORF">SCY_0635</name>
</gene>
<accession>A6ZTP2</accession>
<name>ATG15_YEAS7</name>
<organism>
    <name type="scientific">Saccharomyces cerevisiae (strain YJM789)</name>
    <name type="common">Baker's yeast</name>
    <dbReference type="NCBI Taxonomy" id="307796"/>
    <lineage>
        <taxon>Eukaryota</taxon>
        <taxon>Fungi</taxon>
        <taxon>Dikarya</taxon>
        <taxon>Ascomycota</taxon>
        <taxon>Saccharomycotina</taxon>
        <taxon>Saccharomycetes</taxon>
        <taxon>Saccharomycetales</taxon>
        <taxon>Saccharomycetaceae</taxon>
        <taxon>Saccharomyces</taxon>
    </lineage>
</organism>
<reference key="1">
    <citation type="journal article" date="2007" name="Proc. Natl. Acad. Sci. U.S.A.">
        <title>Genome sequencing and comparative analysis of Saccharomyces cerevisiae strain YJM789.</title>
        <authorList>
            <person name="Wei W."/>
            <person name="McCusker J.H."/>
            <person name="Hyman R.W."/>
            <person name="Jones T."/>
            <person name="Ning Y."/>
            <person name="Cao Z."/>
            <person name="Gu Z."/>
            <person name="Bruno D."/>
            <person name="Miranda M."/>
            <person name="Nguyen M."/>
            <person name="Wilhelmy J."/>
            <person name="Komp C."/>
            <person name="Tamse R."/>
            <person name="Wang X."/>
            <person name="Jia P."/>
            <person name="Luedi P."/>
            <person name="Oefner P.J."/>
            <person name="David L."/>
            <person name="Dietrich F.S."/>
            <person name="Li Y."/>
            <person name="Davis R.W."/>
            <person name="Steinmetz L.M."/>
        </authorList>
    </citation>
    <scope>NUCLEOTIDE SEQUENCE [LARGE SCALE GENOMIC DNA]</scope>
    <source>
        <strain>YJM789</strain>
    </source>
</reference>
<feature type="chain" id="PRO_0000317974" description="Putative lipase ATG15">
    <location>
        <begin position="1"/>
        <end position="520"/>
    </location>
</feature>
<feature type="topological domain" description="Cytoplasmic" evidence="1">
    <location>
        <begin position="1"/>
        <end position="14"/>
    </location>
</feature>
<feature type="transmembrane region" description="Helical; Signal-anchor for type II membrane protein">
    <location>
        <begin position="15"/>
        <end position="35"/>
    </location>
</feature>
<feature type="topological domain" description="Lumenal" evidence="1">
    <location>
        <begin position="36"/>
        <end position="520"/>
    </location>
</feature>
<feature type="active site" description="Charge relay system" evidence="4">
    <location>
        <position position="332"/>
    </location>
</feature>
<feature type="glycosylation site" description="N-linked (GlcNAc...) asparagine" evidence="3">
    <location>
        <position position="173"/>
    </location>
</feature>
<feature type="glycosylation site" description="N-linked (GlcNAc...) asparagine" evidence="3">
    <location>
        <position position="202"/>
    </location>
</feature>
<feature type="glycosylation site" description="N-linked (GlcNAc...) asparagine" evidence="3">
    <location>
        <position position="208"/>
    </location>
</feature>
<evidence type="ECO:0000250" key="1"/>
<evidence type="ECO:0000250" key="2">
    <source>
        <dbReference type="UniProtKB" id="P25641"/>
    </source>
</evidence>
<evidence type="ECO:0000255" key="3"/>
<evidence type="ECO:0000255" key="4">
    <source>
        <dbReference type="PROSITE-ProRule" id="PRU10037"/>
    </source>
</evidence>
<evidence type="ECO:0000305" key="5"/>
<comment type="function">
    <text evidence="1">Lipase which is essential for lysis of subvacuolar cytoplasm to vacuole targeted bodies and intravacuolar autophagic bodies. Involved in the lysis of intravacuolar multivesicular body (MVB) vesicles. The intravacuolar membrane disintegration by ATG15 is critical to life span extension (By similarity).</text>
</comment>
<comment type="catalytic activity">
    <reaction>
        <text>a triacylglycerol + H2O = a diacylglycerol + a fatty acid + H(+)</text>
        <dbReference type="Rhea" id="RHEA:12044"/>
        <dbReference type="ChEBI" id="CHEBI:15377"/>
        <dbReference type="ChEBI" id="CHEBI:15378"/>
        <dbReference type="ChEBI" id="CHEBI:17855"/>
        <dbReference type="ChEBI" id="CHEBI:18035"/>
        <dbReference type="ChEBI" id="CHEBI:28868"/>
        <dbReference type="EC" id="3.1.1.3"/>
    </reaction>
</comment>
<comment type="subunit">
    <text evidence="1">Binds to both phosphatidylinositol (PI) and phosphatidylinositol 3,5-bisphosphate (PIP2).</text>
</comment>
<comment type="subcellular location">
    <subcellularLocation>
        <location evidence="2">Endosome</location>
        <location evidence="2">Multivesicular body membrane</location>
        <topology evidence="2">Single-pass type II membrane protein</topology>
    </subcellularLocation>
    <subcellularLocation>
        <location evidence="2">Prevacuolar compartment membrane</location>
        <topology evidence="2">Single-pass type II membrane protein</topology>
    </subcellularLocation>
    <text evidence="2">From ER, targeted to vacuolar lumen at the MVB vesicles via the Golgi and the prevacuolar compartment (PVC).</text>
</comment>
<comment type="similarity">
    <text evidence="5">Belongs to the AB hydrolase superfamily. Lipase family.</text>
</comment>
<proteinExistence type="inferred from homology"/>